<accession>A8AHC2</accession>
<organism>
    <name type="scientific">Citrobacter koseri (strain ATCC BAA-895 / CDC 4225-83 / SGSC4696)</name>
    <dbReference type="NCBI Taxonomy" id="290338"/>
    <lineage>
        <taxon>Bacteria</taxon>
        <taxon>Pseudomonadati</taxon>
        <taxon>Pseudomonadota</taxon>
        <taxon>Gammaproteobacteria</taxon>
        <taxon>Enterobacterales</taxon>
        <taxon>Enterobacteriaceae</taxon>
        <taxon>Citrobacter</taxon>
    </lineage>
</organism>
<sequence>MMKPLRQQNRPVISYVPRVEPAPPEHAIKMDAFRDVWILRGKYVAFILMGEAFQRSPAFTVPESAQRWANQVRQENEIAE</sequence>
<comment type="function">
    <text evidence="1">Activates the cell division inhibited by chromosomal DNA over-replication.</text>
</comment>
<comment type="similarity">
    <text evidence="1">Belongs to the CedA family.</text>
</comment>
<feature type="chain" id="PRO_1000069274" description="Cell division activator CedA">
    <location>
        <begin position="1"/>
        <end position="80"/>
    </location>
</feature>
<name>CEDA_CITK8</name>
<proteinExistence type="inferred from homology"/>
<gene>
    <name evidence="1" type="primary">cedA</name>
    <name type="ordered locus">CKO_01756</name>
</gene>
<reference key="1">
    <citation type="submission" date="2007-08" db="EMBL/GenBank/DDBJ databases">
        <authorList>
            <consortium name="The Citrobacter koseri Genome Sequencing Project"/>
            <person name="McClelland M."/>
            <person name="Sanderson E.K."/>
            <person name="Porwollik S."/>
            <person name="Spieth J."/>
            <person name="Clifton W.S."/>
            <person name="Latreille P."/>
            <person name="Courtney L."/>
            <person name="Wang C."/>
            <person name="Pepin K."/>
            <person name="Bhonagiri V."/>
            <person name="Nash W."/>
            <person name="Johnson M."/>
            <person name="Thiruvilangam P."/>
            <person name="Wilson R."/>
        </authorList>
    </citation>
    <scope>NUCLEOTIDE SEQUENCE [LARGE SCALE GENOMIC DNA]</scope>
    <source>
        <strain>ATCC BAA-895 / CDC 4225-83 / SGSC4696</strain>
    </source>
</reference>
<protein>
    <recommendedName>
        <fullName evidence="1">Cell division activator CedA</fullName>
    </recommendedName>
</protein>
<keyword id="KW-0131">Cell cycle</keyword>
<keyword id="KW-0132">Cell division</keyword>
<keyword id="KW-0238">DNA-binding</keyword>
<keyword id="KW-1185">Reference proteome</keyword>
<dbReference type="EMBL" id="CP000822">
    <property type="protein sequence ID" value="ABV12885.1"/>
    <property type="molecule type" value="Genomic_DNA"/>
</dbReference>
<dbReference type="SMR" id="A8AHC2"/>
<dbReference type="STRING" id="290338.CKO_01756"/>
<dbReference type="KEGG" id="cko:CKO_01756"/>
<dbReference type="HOGENOM" id="CLU_167445_0_0_6"/>
<dbReference type="OrthoDB" id="6570002at2"/>
<dbReference type="Proteomes" id="UP000008148">
    <property type="component" value="Chromosome"/>
</dbReference>
<dbReference type="GO" id="GO:0003677">
    <property type="term" value="F:DNA binding"/>
    <property type="evidence" value="ECO:0007669"/>
    <property type="project" value="UniProtKB-UniRule"/>
</dbReference>
<dbReference type="GO" id="GO:0051301">
    <property type="term" value="P:cell division"/>
    <property type="evidence" value="ECO:0007669"/>
    <property type="project" value="UniProtKB-UniRule"/>
</dbReference>
<dbReference type="Gene3D" id="3.30.730.20">
    <property type="entry name" value="Cell division activator CedA"/>
    <property type="match status" value="1"/>
</dbReference>
<dbReference type="HAMAP" id="MF_01580">
    <property type="entry name" value="CedA"/>
    <property type="match status" value="1"/>
</dbReference>
<dbReference type="InterPro" id="IPR038463">
    <property type="entry name" value="CedA-like_sf"/>
</dbReference>
<dbReference type="InterPro" id="IPR019666">
    <property type="entry name" value="Cell_div_activator_CedA"/>
</dbReference>
<dbReference type="NCBIfam" id="NF007510">
    <property type="entry name" value="PRK10113.1"/>
    <property type="match status" value="1"/>
</dbReference>
<dbReference type="Pfam" id="PF10729">
    <property type="entry name" value="CedA"/>
    <property type="match status" value="1"/>
</dbReference>
<evidence type="ECO:0000255" key="1">
    <source>
        <dbReference type="HAMAP-Rule" id="MF_01580"/>
    </source>
</evidence>